<comment type="function">
    <text evidence="1">Multifunctional enzyme involved in mRNA capping. Catalyzes the formation of the 5' cap structure on the viral plus-strand transcripts. Specifically binds to GTP and displays guanylyltransferase and methyltransferase activities. Has affinity for ssRNA but not for dsRNA. Capping activity is non-specific and caps RNAs that initiate with either a G or an A residue. Together with VP1 polymerase, forms a VP1-VP3 complex positioned near the channels situated at each of the five-fold vertices of the core. Following infection, the outermost layer of the virus is lost, leaving a double-layered particle (DLP) made up of the core and VP6 shell. VP1 then catalyzes the transcription of fully conservative plus-strand genomic RNAs that are capped by VP3 and extruded through the DLP's channels into the cytoplasm where they function as mRNAs for translation of viral proteins. DLPs probably have an RNA triphosphatase activity as well, whereas open cores do not.</text>
</comment>
<comment type="function">
    <text evidence="1">Counteracts the host innate immune response thanks to its phosphodiesterase that degrades the 5'-triphosphorylated, 2'-5' linked adenylate oligomers produced by the host cell IFN-inducible 2',5'-oligoadenylate synthetase (OAS). The host RNaseL is therefore not activated.</text>
</comment>
<comment type="catalytic activity">
    <reaction evidence="1">
        <text>a 5'-end diphospho-ribonucleoside in mRNA + GTP + H(+) = a 5'-end (5'-triphosphoguanosine)-ribonucleoside in mRNA + diphosphate</text>
        <dbReference type="Rhea" id="RHEA:67012"/>
        <dbReference type="Rhea" id="RHEA-COMP:17165"/>
        <dbReference type="Rhea" id="RHEA-COMP:17166"/>
        <dbReference type="ChEBI" id="CHEBI:15378"/>
        <dbReference type="ChEBI" id="CHEBI:33019"/>
        <dbReference type="ChEBI" id="CHEBI:37565"/>
        <dbReference type="ChEBI" id="CHEBI:167616"/>
        <dbReference type="ChEBI" id="CHEBI:167617"/>
        <dbReference type="EC" id="2.7.7.50"/>
    </reaction>
</comment>
<comment type="catalytic activity">
    <reaction evidence="1">
        <text>a 5'-end (5'-triphosphoguanosine)-ribonucleoside in mRNA + S-adenosyl-L-methionine = a 5'-end (N(7)-methyl 5'-triphosphoguanosine)-ribonucleoside in mRNA + S-adenosyl-L-homocysteine</text>
        <dbReference type="Rhea" id="RHEA:67008"/>
        <dbReference type="Rhea" id="RHEA-COMP:17166"/>
        <dbReference type="Rhea" id="RHEA-COMP:17167"/>
        <dbReference type="ChEBI" id="CHEBI:57856"/>
        <dbReference type="ChEBI" id="CHEBI:59789"/>
        <dbReference type="ChEBI" id="CHEBI:156461"/>
        <dbReference type="ChEBI" id="CHEBI:167617"/>
        <dbReference type="EC" id="2.1.1.56"/>
    </reaction>
</comment>
<comment type="catalytic activity">
    <reaction evidence="1">
        <text>5'-triphosphoadenylyl-(2'-&gt;5')-adenylyl-(2'-&gt;5')-adenosine + 2 H2O = 2 AMP + ATP + 2 H(+)</text>
        <dbReference type="Rhea" id="RHEA:45964"/>
        <dbReference type="ChEBI" id="CHEBI:15377"/>
        <dbReference type="ChEBI" id="CHEBI:15378"/>
        <dbReference type="ChEBI" id="CHEBI:30616"/>
        <dbReference type="ChEBI" id="CHEBI:67143"/>
        <dbReference type="ChEBI" id="CHEBI:456215"/>
    </reaction>
</comment>
<comment type="subunit">
    <text evidence="1">Interacts with VP1. Interacts with VP2.</text>
</comment>
<comment type="subcellular location">
    <subcellularLocation>
        <location evidence="1">Virion</location>
    </subcellularLocation>
    <text evidence="1">Attached inside the inner capsid as a minor component. There are about 11 to 12 copies per virion.</text>
</comment>
<comment type="domain">
    <text evidence="1">Contains a bipartite N7-methyltransferase domain, a 2'-O-methyltransferase domain and a GTase/RTPase domain. The C-terminus contains a phosphodiesterase domain that degrades the 5'-triphosphorylated, 2'-5' linked adenylate oligomers produced by the host cell in response to IFN stimulation.</text>
</comment>
<comment type="similarity">
    <text evidence="1">Belongs to the rotavirus VP3 family.</text>
</comment>
<protein>
    <recommendedName>
        <fullName evidence="1">Protein VP3</fullName>
    </recommendedName>
    <domain>
        <recommendedName>
            <fullName evidence="1">2',5'-phosphodiesterase</fullName>
            <ecNumber evidence="1">3.1.4.-</ecNumber>
        </recommendedName>
    </domain>
    <domain>
        <recommendedName>
            <fullName evidence="1">mRNA guanylyltransferase</fullName>
            <ecNumber evidence="1">2.7.7.50</ecNumber>
        </recommendedName>
    </domain>
    <domain>
        <recommendedName>
            <fullName evidence="1">mRNA (guanine-N(7))-methyltransferase</fullName>
            <ecNumber evidence="1">2.1.1.56</ecNumber>
        </recommendedName>
    </domain>
</protein>
<feature type="chain" id="PRO_0000368079" description="Protein VP3">
    <location>
        <begin position="1"/>
        <end position="835"/>
    </location>
</feature>
<feature type="region of interest" description="N7-methyltransferase activity" evidence="1">
    <location>
        <begin position="171"/>
        <end position="245"/>
    </location>
</feature>
<feature type="region of interest" description="2'-O-methyltransferase activity" evidence="1">
    <location>
        <begin position="246"/>
        <end position="428"/>
    </location>
</feature>
<feature type="region of interest" description="N7-methyltransferase activity" evidence="1">
    <location>
        <begin position="429"/>
        <end position="555"/>
    </location>
</feature>
<feature type="region of interest" description="GTase/RTPase activity" evidence="1">
    <location>
        <begin position="556"/>
        <end position="692"/>
    </location>
</feature>
<feature type="region of interest" description="2'-5'-phosphodiesterase activity" evidence="1">
    <location>
        <begin position="693"/>
        <end position="835"/>
    </location>
</feature>
<feature type="active site" description="For 2'-5'-phosphodiesterase activity" evidence="1">
    <location>
        <position position="718"/>
    </location>
</feature>
<feature type="active site" description="For 2'-5'-phosphodiesterase activity" evidence="1">
    <location>
        <position position="720"/>
    </location>
</feature>
<feature type="active site" description="For 2'-5'-phosphodiesterase activity" evidence="1">
    <location>
        <position position="797"/>
    </location>
</feature>
<feature type="active site" description="For 2'-5'-phosphodiesterase activity" evidence="1">
    <location>
        <position position="799"/>
    </location>
</feature>
<name>VP3_ROTHK</name>
<reference key="1">
    <citation type="submission" date="1999-01" db="EMBL/GenBank/DDBJ databases">
        <authorList>
            <person name="Taniguchi K."/>
        </authorList>
    </citation>
    <scope>NUCLEOTIDE SEQUENCE [MRNA]</scope>
</reference>
<organism>
    <name type="scientific">Rotavirus A (strain RVA/Human/Japan/KU/1995/G1P1A[8])</name>
    <name type="common">RV-A</name>
    <dbReference type="NCBI Taxonomy" id="10952"/>
    <lineage>
        <taxon>Viruses</taxon>
        <taxon>Riboviria</taxon>
        <taxon>Orthornavirae</taxon>
        <taxon>Duplornaviricota</taxon>
        <taxon>Resentoviricetes</taxon>
        <taxon>Reovirales</taxon>
        <taxon>Sedoreoviridae</taxon>
        <taxon>Rotavirus</taxon>
        <taxon>Rotavirus A</taxon>
    </lineage>
</organism>
<sequence length="835" mass="97858">MKVLALRHSVAQVYADTQTYLHDDSKDEYENAFLISNLTAHNILYLNYSLKTLKILNKSGIAAVETQSPDELFALIRCNFTYDYENNIVYLHDYSYYTNNEIRTDQHWITKTDIIDYLLPGWKLTYVGYNGKNTRGHYNFSFSCQNAATDDDIIVEYIYSNELDFQNFMLRKIKERMTTSLPIARLSNRVFRDKLFPSIANMHKRVINVGPRNESMFTFLNFPTIKQFSNGAYIVKHTIKLKQEKWLGKRVSQFDIGQYKNMLNVVTTIYYYYNLYHSKPIIYMLGSAPSYWIYNVKQYSDFTFETWDPVDTPYSTTHHKELFFDKDVMKLKDDSVLYIDIRTDRKNMDWKEWRKVVEQQTVSNLNIAYNYLSTGKAKVCCVKLTAMDLELPITAKLLHHPTTEVRSEFYAILDVWDIITIKRFIPKGVFYAFINNITTENVFIQPPFKLKASPTDYIVALYALSNDFNSRQDVINLINKQKQSLITVRINNTFKDEPKVNFKNIYDWTFLPTDFELKDSVITSYDGCLGMFGLSLSLSSKPTGNNHLFIINGTDKYYKLDQYANHMGISRRSHQIRFSESATSYSGYIFRDLSNNNFNLIGTNVENSVSGHVYNALIYYRYNYAFDLKRWIYLHSIGKVAVEGGRYYEHAPIELIYACRSAREFAILQDDLTVLRYANEIEGYINKVYSITYADDPNYFIGITFNNIPYEYDVKVPHLTLGVLFISDNMIDEVVAVLKEMKTELFKTEISTSYNYMLFDNVYVANASGVLSTYFKLYNMFYRNHITFGQSRMFIPHITLSFSNKRTIRIESTRLKINSIYLRKIRGETVFDMSE</sequence>
<dbReference type="EC" id="3.1.4.-" evidence="1"/>
<dbReference type="EC" id="2.7.7.50" evidence="1"/>
<dbReference type="EC" id="2.1.1.56" evidence="1"/>
<dbReference type="EMBL" id="AB022767">
    <property type="protein sequence ID" value="BAA84964.1"/>
    <property type="molecule type" value="mRNA"/>
</dbReference>
<dbReference type="SMR" id="Q9QNB1"/>
<dbReference type="Proteomes" id="UP000001458">
    <property type="component" value="Genome"/>
</dbReference>
<dbReference type="GO" id="GO:0019013">
    <property type="term" value="C:viral nucleocapsid"/>
    <property type="evidence" value="ECO:0007669"/>
    <property type="project" value="UniProtKB-UniRule"/>
</dbReference>
<dbReference type="GO" id="GO:0005525">
    <property type="term" value="F:GTP binding"/>
    <property type="evidence" value="ECO:0007669"/>
    <property type="project" value="UniProtKB-UniRule"/>
</dbReference>
<dbReference type="GO" id="GO:0016787">
    <property type="term" value="F:hydrolase activity"/>
    <property type="evidence" value="ECO:0007669"/>
    <property type="project" value="UniProtKB-KW"/>
</dbReference>
<dbReference type="GO" id="GO:0004482">
    <property type="term" value="F:mRNA 5'-cap (guanine-N7-)-methyltransferase activity"/>
    <property type="evidence" value="ECO:0007669"/>
    <property type="project" value="UniProtKB-UniRule"/>
</dbReference>
<dbReference type="GO" id="GO:0004484">
    <property type="term" value="F:mRNA guanylyltransferase activity"/>
    <property type="evidence" value="ECO:0007669"/>
    <property type="project" value="UniProtKB-UniRule"/>
</dbReference>
<dbReference type="GO" id="GO:0003723">
    <property type="term" value="F:RNA binding"/>
    <property type="evidence" value="ECO:0007669"/>
    <property type="project" value="UniProtKB-UniRule"/>
</dbReference>
<dbReference type="GO" id="GO:0052170">
    <property type="term" value="P:symbiont-mediated suppression of host innate immune response"/>
    <property type="evidence" value="ECO:0007669"/>
    <property type="project" value="UniProtKB-KW"/>
</dbReference>
<dbReference type="GO" id="GO:0016032">
    <property type="term" value="P:viral process"/>
    <property type="evidence" value="ECO:0007669"/>
    <property type="project" value="UniProtKB-UniRule"/>
</dbReference>
<dbReference type="CDD" id="cd20757">
    <property type="entry name" value="capping_2-OMTase_Rotavirus"/>
    <property type="match status" value="1"/>
</dbReference>
<dbReference type="HAMAP" id="MF_04124">
    <property type="entry name" value="Rota_VP3"/>
    <property type="match status" value="1"/>
</dbReference>
<dbReference type="HAMAP" id="MF_04128">
    <property type="entry name" value="Rota_VP3_A"/>
    <property type="match status" value="1"/>
</dbReference>
<dbReference type="InterPro" id="IPR011181">
    <property type="entry name" value="VP3_Rotav"/>
</dbReference>
<dbReference type="Pfam" id="PF06929">
    <property type="entry name" value="Rotavirus_VP3"/>
    <property type="match status" value="1"/>
</dbReference>
<dbReference type="PIRSF" id="PIRSF004015">
    <property type="entry name" value="LigT_rotavirus"/>
    <property type="match status" value="1"/>
</dbReference>
<dbReference type="PROSITE" id="PS51589">
    <property type="entry name" value="SAM_MT56_VP3"/>
    <property type="match status" value="1"/>
</dbReference>
<evidence type="ECO:0000255" key="1">
    <source>
        <dbReference type="HAMAP-Rule" id="MF_04128"/>
    </source>
</evidence>
<accession>Q9QNB1</accession>
<proteinExistence type="evidence at transcript level"/>
<organismHost>
    <name type="scientific">Homo sapiens</name>
    <name type="common">Human</name>
    <dbReference type="NCBI Taxonomy" id="9606"/>
</organismHost>
<keyword id="KW-0342">GTP-binding</keyword>
<keyword id="KW-0945">Host-virus interaction</keyword>
<keyword id="KW-0378">Hydrolase</keyword>
<keyword id="KW-1090">Inhibition of host innate immune response by virus</keyword>
<keyword id="KW-0489">Methyltransferase</keyword>
<keyword id="KW-0506">mRNA capping</keyword>
<keyword id="KW-0507">mRNA processing</keyword>
<keyword id="KW-0511">Multifunctional enzyme</keyword>
<keyword id="KW-0547">Nucleotide-binding</keyword>
<keyword id="KW-0548">Nucleotidyltransferase</keyword>
<keyword id="KW-0694">RNA-binding</keyword>
<keyword id="KW-0949">S-adenosyl-L-methionine</keyword>
<keyword id="KW-0808">Transferase</keyword>
<keyword id="KW-0899">Viral immunoevasion</keyword>
<keyword id="KW-0946">Virion</keyword>